<name>CHS2_PEA</name>
<evidence type="ECO:0000255" key="1">
    <source>
        <dbReference type="PROSITE-ProRule" id="PRU10023"/>
    </source>
</evidence>
<evidence type="ECO:0000305" key="2"/>
<proteinExistence type="evidence at transcript level"/>
<comment type="function">
    <text>The primary product of this enzyme is 4,2',4',6'-tetrahydroxychalcone (also termed naringenin-chalcone or chalcone) which can under specific conditions spontaneously isomerize into naringenin.</text>
</comment>
<comment type="catalytic activity">
    <reaction evidence="1">
        <text>(E)-4-coumaroyl-CoA + 3 malonyl-CoA + 3 H(+) = 2',4,4',6'-tetrahydroxychalcone + 3 CO2 + 4 CoA</text>
        <dbReference type="Rhea" id="RHEA:11128"/>
        <dbReference type="ChEBI" id="CHEBI:15378"/>
        <dbReference type="ChEBI" id="CHEBI:15413"/>
        <dbReference type="ChEBI" id="CHEBI:16526"/>
        <dbReference type="ChEBI" id="CHEBI:57287"/>
        <dbReference type="ChEBI" id="CHEBI:57384"/>
        <dbReference type="ChEBI" id="CHEBI:85008"/>
        <dbReference type="EC" id="2.3.1.74"/>
    </reaction>
</comment>
<comment type="pathway">
    <text>Secondary metabolite biosynthesis; flavonoid biosynthesis.</text>
</comment>
<comment type="similarity">
    <text evidence="2">Belongs to the thiolase-like superfamily. Chalcone/stilbene synthases family.</text>
</comment>
<sequence>MVTVSEIRKAQRAEGPATILAIGTANPANCVEQSTYPDFYFKITNSEHKTVLKEKFQRMCDKSMIKRRYMYLTEDILKENPSLCEYMAPSLDARQDMVVVEVPRLGKEAAVKAIKEWGQPKSKITHLIFCTTSGVDMPGADYQLTKLLGLRPYVKRYMMYQQGCFAGGTVFRLAKDLAENNKNARVLVVCSEVTAVTFRGPSDTHLDSLVGQALFGDGAAALIVGSDPVPEIEKPIFEMVWTAQTIAPDSEGAIDGHLREAGLTFHLLKDVPGIVSKNIDKALVEAFKPLGISDYNSIFWIAHPGGPAILDQVEQKLALKPEKMRATREVLSEYGNMSSACVLFILDEMRKKSTQDGLNTTGEGLEWGVLFGFGPGLTIETVVLRSVAI</sequence>
<reference key="1">
    <citation type="journal article" date="1992" name="Plant Mol. Biol.">
        <title>Molecular cloning of chalcone synthase cDNAs from Pisum sativum.</title>
        <authorList>
            <person name="Ichinose Y."/>
            <person name="Kawamata S."/>
            <person name="Yamada T."/>
            <person name="An C."/>
            <person name="Kajiwara T."/>
            <person name="Shiraishi T."/>
            <person name="Oku H."/>
        </authorList>
    </citation>
    <scope>NUCLEOTIDE SEQUENCE [MRNA]</scope>
    <source>
        <strain>cv. Midoriusui</strain>
        <tissue>Epicotyl</tissue>
    </source>
</reference>
<reference key="2">
    <citation type="journal article" date="1993" name="Plant Mol. Biol.">
        <title>Organization of the genes encoding chalcone synthase in Pisum sativum.</title>
        <authorList>
            <person name="An C."/>
            <person name="Ichinose Y."/>
            <person name="Yamada T."/>
            <person name="Tanaka Y."/>
            <person name="Shiraishi T."/>
            <person name="Oku H."/>
        </authorList>
    </citation>
    <scope>NUCLEOTIDE SEQUENCE [GENOMIC DNA] OF 1-128</scope>
    <source>
        <strain>cv. Midoriusui</strain>
        <tissue>Epicotyl</tissue>
    </source>
</reference>
<feature type="chain" id="PRO_0000216019" description="Chalcone synthase 2">
    <location>
        <begin position="1"/>
        <end position="389"/>
    </location>
</feature>
<feature type="active site" evidence="1">
    <location>
        <position position="164"/>
    </location>
</feature>
<accession>Q01287</accession>
<keyword id="KW-0012">Acyltransferase</keyword>
<keyword id="KW-0284">Flavonoid biosynthesis</keyword>
<keyword id="KW-0808">Transferase</keyword>
<organism>
    <name type="scientific">Pisum sativum</name>
    <name type="common">Garden pea</name>
    <name type="synonym">Lathyrus oleraceus</name>
    <dbReference type="NCBI Taxonomy" id="3888"/>
    <lineage>
        <taxon>Eukaryota</taxon>
        <taxon>Viridiplantae</taxon>
        <taxon>Streptophyta</taxon>
        <taxon>Embryophyta</taxon>
        <taxon>Tracheophyta</taxon>
        <taxon>Spermatophyta</taxon>
        <taxon>Magnoliopsida</taxon>
        <taxon>eudicotyledons</taxon>
        <taxon>Gunneridae</taxon>
        <taxon>Pentapetalae</taxon>
        <taxon>rosids</taxon>
        <taxon>fabids</taxon>
        <taxon>Fabales</taxon>
        <taxon>Fabaceae</taxon>
        <taxon>Papilionoideae</taxon>
        <taxon>50 kb inversion clade</taxon>
        <taxon>NPAAA clade</taxon>
        <taxon>Hologalegina</taxon>
        <taxon>IRL clade</taxon>
        <taxon>Fabeae</taxon>
        <taxon>Pisum</taxon>
    </lineage>
</organism>
<protein>
    <recommendedName>
        <fullName>Chalcone synthase 2</fullName>
        <ecNumber>2.3.1.74</ecNumber>
    </recommendedName>
    <alternativeName>
        <fullName>Naregenin-chalcone synthase 2</fullName>
    </alternativeName>
</protein>
<gene>
    <name type="primary">CHS2</name>
</gene>
<dbReference type="EC" id="2.3.1.74"/>
<dbReference type="EMBL" id="X63334">
    <property type="protein sequence ID" value="CAA44934.1"/>
    <property type="molecule type" value="mRNA"/>
</dbReference>
<dbReference type="EMBL" id="D10662">
    <property type="protein sequence ID" value="BAA01513.1"/>
    <property type="molecule type" value="Genomic_DNA"/>
</dbReference>
<dbReference type="PIR" id="S20932">
    <property type="entry name" value="S20932"/>
</dbReference>
<dbReference type="SMR" id="Q01287"/>
<dbReference type="UniPathway" id="UPA00154"/>
<dbReference type="GO" id="GO:0016210">
    <property type="term" value="F:naringenin-chalcone synthase activity"/>
    <property type="evidence" value="ECO:0007669"/>
    <property type="project" value="UniProtKB-EC"/>
</dbReference>
<dbReference type="GO" id="GO:0009813">
    <property type="term" value="P:flavonoid biosynthetic process"/>
    <property type="evidence" value="ECO:0007669"/>
    <property type="project" value="UniProtKB-UniPathway"/>
</dbReference>
<dbReference type="GO" id="GO:0030639">
    <property type="term" value="P:polyketide biosynthetic process"/>
    <property type="evidence" value="ECO:0007669"/>
    <property type="project" value="TreeGrafter"/>
</dbReference>
<dbReference type="CDD" id="cd00831">
    <property type="entry name" value="CHS_like"/>
    <property type="match status" value="1"/>
</dbReference>
<dbReference type="FunFam" id="3.40.47.10:FF:000014">
    <property type="entry name" value="Chalcone synthase 1"/>
    <property type="match status" value="1"/>
</dbReference>
<dbReference type="FunFam" id="3.40.47.10:FF:000025">
    <property type="entry name" value="Chalcone synthase 2"/>
    <property type="match status" value="1"/>
</dbReference>
<dbReference type="Gene3D" id="3.40.47.10">
    <property type="match status" value="2"/>
</dbReference>
<dbReference type="InterPro" id="IPR012328">
    <property type="entry name" value="Chalcone/stilbene_synt_C"/>
</dbReference>
<dbReference type="InterPro" id="IPR001099">
    <property type="entry name" value="Chalcone/stilbene_synt_N"/>
</dbReference>
<dbReference type="InterPro" id="IPR018088">
    <property type="entry name" value="Chalcone/stilbene_synthase_AS"/>
</dbReference>
<dbReference type="InterPro" id="IPR011141">
    <property type="entry name" value="Polyketide_synthase_type-III"/>
</dbReference>
<dbReference type="InterPro" id="IPR016039">
    <property type="entry name" value="Thiolase-like"/>
</dbReference>
<dbReference type="PANTHER" id="PTHR11877:SF62">
    <property type="entry name" value="CHALCONE SYNTHASE 7"/>
    <property type="match status" value="1"/>
</dbReference>
<dbReference type="PANTHER" id="PTHR11877">
    <property type="entry name" value="HYDROXYMETHYLGLUTARYL-COA SYNTHASE"/>
    <property type="match status" value="1"/>
</dbReference>
<dbReference type="Pfam" id="PF02797">
    <property type="entry name" value="Chal_sti_synt_C"/>
    <property type="match status" value="1"/>
</dbReference>
<dbReference type="Pfam" id="PF00195">
    <property type="entry name" value="Chal_sti_synt_N"/>
    <property type="match status" value="1"/>
</dbReference>
<dbReference type="PIRSF" id="PIRSF000451">
    <property type="entry name" value="PKS_III"/>
    <property type="match status" value="1"/>
</dbReference>
<dbReference type="SUPFAM" id="SSF53901">
    <property type="entry name" value="Thiolase-like"/>
    <property type="match status" value="2"/>
</dbReference>
<dbReference type="PROSITE" id="PS00441">
    <property type="entry name" value="CHALCONE_SYNTH"/>
    <property type="match status" value="1"/>
</dbReference>